<organism>
    <name type="scientific">Aliivibrio fischeri (strain ATCC 700601 / ES114)</name>
    <name type="common">Vibrio fischeri</name>
    <dbReference type="NCBI Taxonomy" id="312309"/>
    <lineage>
        <taxon>Bacteria</taxon>
        <taxon>Pseudomonadati</taxon>
        <taxon>Pseudomonadota</taxon>
        <taxon>Gammaproteobacteria</taxon>
        <taxon>Vibrionales</taxon>
        <taxon>Vibrionaceae</taxon>
        <taxon>Aliivibrio</taxon>
    </lineage>
</organism>
<sequence>MNHFELFGLPNQFELDGGLLSLQFRELQKRFHPDNFATSSERDRLLSIQKAAQINDAYQTLKNPVSRAEYILSEQGHDIRGEQTTMQDPMFLMQQMELREELESLPSSSDPESALFDFAENVTAMRKSQLVQLQELLKNEAWIEAAQSVRKLKFIEKLNQEVEQLEEKLLG</sequence>
<protein>
    <recommendedName>
        <fullName evidence="1">Co-chaperone protein HscB homolog</fullName>
    </recommendedName>
</protein>
<reference key="1">
    <citation type="journal article" date="2005" name="Proc. Natl. Acad. Sci. U.S.A.">
        <title>Complete genome sequence of Vibrio fischeri: a symbiotic bacterium with pathogenic congeners.</title>
        <authorList>
            <person name="Ruby E.G."/>
            <person name="Urbanowski M."/>
            <person name="Campbell J."/>
            <person name="Dunn A."/>
            <person name="Faini M."/>
            <person name="Gunsalus R."/>
            <person name="Lostroh P."/>
            <person name="Lupp C."/>
            <person name="McCann J."/>
            <person name="Millikan D."/>
            <person name="Schaefer A."/>
            <person name="Stabb E."/>
            <person name="Stevens A."/>
            <person name="Visick K."/>
            <person name="Whistler C."/>
            <person name="Greenberg E.P."/>
        </authorList>
    </citation>
    <scope>NUCLEOTIDE SEQUENCE [LARGE SCALE GENOMIC DNA]</scope>
    <source>
        <strain>ATCC 700601 / ES114</strain>
    </source>
</reference>
<feature type="chain" id="PRO_0000070993" description="Co-chaperone protein HscB homolog">
    <location>
        <begin position="1"/>
        <end position="171"/>
    </location>
</feature>
<feature type="domain" description="J" evidence="1">
    <location>
        <begin position="2"/>
        <end position="74"/>
    </location>
</feature>
<name>HSCB_ALIF1</name>
<accession>Q5E781</accession>
<evidence type="ECO:0000255" key="1">
    <source>
        <dbReference type="HAMAP-Rule" id="MF_00682"/>
    </source>
</evidence>
<dbReference type="EMBL" id="CP000020">
    <property type="protein sequence ID" value="AAW85115.1"/>
    <property type="molecule type" value="Genomic_DNA"/>
</dbReference>
<dbReference type="RefSeq" id="WP_011261361.1">
    <property type="nucleotide sequence ID" value="NZ_CAWLES010000001.1"/>
</dbReference>
<dbReference type="RefSeq" id="YP_204003.1">
    <property type="nucleotide sequence ID" value="NC_006840.2"/>
</dbReference>
<dbReference type="SMR" id="Q5E781"/>
<dbReference type="STRING" id="312309.VF_0620"/>
<dbReference type="EnsemblBacteria" id="AAW85115">
    <property type="protein sequence ID" value="AAW85115"/>
    <property type="gene ID" value="VF_0620"/>
</dbReference>
<dbReference type="GeneID" id="54163273"/>
<dbReference type="KEGG" id="vfi:VF_0620"/>
<dbReference type="PATRIC" id="fig|312309.11.peg.612"/>
<dbReference type="eggNOG" id="COG1076">
    <property type="taxonomic scope" value="Bacteria"/>
</dbReference>
<dbReference type="HOGENOM" id="CLU_068529_2_0_6"/>
<dbReference type="OrthoDB" id="287587at2"/>
<dbReference type="Proteomes" id="UP000000537">
    <property type="component" value="Chromosome I"/>
</dbReference>
<dbReference type="GO" id="GO:1990230">
    <property type="term" value="C:iron-sulfur cluster transfer complex"/>
    <property type="evidence" value="ECO:0007669"/>
    <property type="project" value="TreeGrafter"/>
</dbReference>
<dbReference type="GO" id="GO:0001671">
    <property type="term" value="F:ATPase activator activity"/>
    <property type="evidence" value="ECO:0007669"/>
    <property type="project" value="InterPro"/>
</dbReference>
<dbReference type="GO" id="GO:0051087">
    <property type="term" value="F:protein-folding chaperone binding"/>
    <property type="evidence" value="ECO:0007669"/>
    <property type="project" value="InterPro"/>
</dbReference>
<dbReference type="GO" id="GO:0044571">
    <property type="term" value="P:[2Fe-2S] cluster assembly"/>
    <property type="evidence" value="ECO:0007669"/>
    <property type="project" value="InterPro"/>
</dbReference>
<dbReference type="GO" id="GO:0051259">
    <property type="term" value="P:protein complex oligomerization"/>
    <property type="evidence" value="ECO:0007669"/>
    <property type="project" value="InterPro"/>
</dbReference>
<dbReference type="GO" id="GO:0006457">
    <property type="term" value="P:protein folding"/>
    <property type="evidence" value="ECO:0007669"/>
    <property type="project" value="UniProtKB-UniRule"/>
</dbReference>
<dbReference type="CDD" id="cd06257">
    <property type="entry name" value="DnaJ"/>
    <property type="match status" value="1"/>
</dbReference>
<dbReference type="Gene3D" id="1.10.287.110">
    <property type="entry name" value="DnaJ domain"/>
    <property type="match status" value="1"/>
</dbReference>
<dbReference type="Gene3D" id="1.20.1280.20">
    <property type="entry name" value="HscB, C-terminal domain"/>
    <property type="match status" value="1"/>
</dbReference>
<dbReference type="HAMAP" id="MF_00682">
    <property type="entry name" value="HscB"/>
    <property type="match status" value="1"/>
</dbReference>
<dbReference type="InterPro" id="IPR001623">
    <property type="entry name" value="DnaJ_domain"/>
</dbReference>
<dbReference type="InterPro" id="IPR004640">
    <property type="entry name" value="HscB"/>
</dbReference>
<dbReference type="InterPro" id="IPR036386">
    <property type="entry name" value="HscB_C_sf"/>
</dbReference>
<dbReference type="InterPro" id="IPR009073">
    <property type="entry name" value="HscB_oligo_C"/>
</dbReference>
<dbReference type="InterPro" id="IPR036869">
    <property type="entry name" value="J_dom_sf"/>
</dbReference>
<dbReference type="NCBIfam" id="TIGR00714">
    <property type="entry name" value="hscB"/>
    <property type="match status" value="1"/>
</dbReference>
<dbReference type="NCBIfam" id="NF003449">
    <property type="entry name" value="PRK05014.1"/>
    <property type="match status" value="1"/>
</dbReference>
<dbReference type="PANTHER" id="PTHR14021">
    <property type="entry name" value="IRON-SULFUR CLUSTER CO-CHAPERONE PROTEIN HSCB"/>
    <property type="match status" value="1"/>
</dbReference>
<dbReference type="PANTHER" id="PTHR14021:SF15">
    <property type="entry name" value="IRON-SULFUR CLUSTER CO-CHAPERONE PROTEIN HSCB"/>
    <property type="match status" value="1"/>
</dbReference>
<dbReference type="Pfam" id="PF07743">
    <property type="entry name" value="HSCB_C"/>
    <property type="match status" value="1"/>
</dbReference>
<dbReference type="SMART" id="SM00271">
    <property type="entry name" value="DnaJ"/>
    <property type="match status" value="1"/>
</dbReference>
<dbReference type="SUPFAM" id="SSF46565">
    <property type="entry name" value="Chaperone J-domain"/>
    <property type="match status" value="1"/>
</dbReference>
<dbReference type="SUPFAM" id="SSF47144">
    <property type="entry name" value="HSC20 (HSCB), C-terminal oligomerisation domain"/>
    <property type="match status" value="1"/>
</dbReference>
<dbReference type="PROSITE" id="PS50076">
    <property type="entry name" value="DNAJ_2"/>
    <property type="match status" value="1"/>
</dbReference>
<comment type="function">
    <text evidence="1">Co-chaperone involved in the maturation of iron-sulfur cluster-containing proteins. Seems to help targeting proteins to be folded toward HscA.</text>
</comment>
<comment type="subunit">
    <text evidence="1">Interacts with HscA and stimulates its ATPase activity.</text>
</comment>
<comment type="similarity">
    <text evidence="1">Belongs to the HscB family.</text>
</comment>
<proteinExistence type="inferred from homology"/>
<gene>
    <name evidence="1" type="primary">hscB</name>
    <name type="ordered locus">VF_0620</name>
</gene>
<keyword id="KW-0143">Chaperone</keyword>
<keyword id="KW-1185">Reference proteome</keyword>